<name>GLGC_ACET2</name>
<gene>
    <name evidence="1" type="primary">glgC</name>
    <name type="ordered locus">Cthe_3166</name>
</gene>
<keyword id="KW-0067">ATP-binding</keyword>
<keyword id="KW-0119">Carbohydrate metabolism</keyword>
<keyword id="KW-0320">Glycogen biosynthesis</keyword>
<keyword id="KW-0321">Glycogen metabolism</keyword>
<keyword id="KW-0547">Nucleotide-binding</keyword>
<keyword id="KW-0548">Nucleotidyltransferase</keyword>
<keyword id="KW-1185">Reference proteome</keyword>
<keyword id="KW-0808">Transferase</keyword>
<organism>
    <name type="scientific">Acetivibrio thermocellus (strain ATCC 27405 / DSM 1237 / JCM 9322 / NBRC 103400 / NCIMB 10682 / NRRL B-4536 / VPI 7372)</name>
    <name type="common">Clostridium thermocellum</name>
    <dbReference type="NCBI Taxonomy" id="203119"/>
    <lineage>
        <taxon>Bacteria</taxon>
        <taxon>Bacillati</taxon>
        <taxon>Bacillota</taxon>
        <taxon>Clostridia</taxon>
        <taxon>Eubacteriales</taxon>
        <taxon>Oscillospiraceae</taxon>
        <taxon>Acetivibrio</taxon>
    </lineage>
</organism>
<proteinExistence type="inferred from homology"/>
<protein>
    <recommendedName>
        <fullName evidence="1">Glucose-1-phosphate adenylyltransferase</fullName>
        <ecNumber evidence="1">2.7.7.27</ecNumber>
    </recommendedName>
    <alternativeName>
        <fullName evidence="1">ADP-glucose pyrophosphorylase</fullName>
        <shortName evidence="1">ADPGlc PPase</shortName>
    </alternativeName>
    <alternativeName>
        <fullName evidence="1">ADP-glucose synthase</fullName>
    </alternativeName>
</protein>
<evidence type="ECO:0000255" key="1">
    <source>
        <dbReference type="HAMAP-Rule" id="MF_00624"/>
    </source>
</evidence>
<accession>A3DK82</accession>
<sequence length="426" mass="47642">MHKKEIIALLLAGGQGSRLGVLTKNIAKPAVLYGGKYRIIDFSLSNCVNSDIDTVGVLTQYQPLELNAHIGIGKPWDMDRINGGVTILSPYLKAEIGEWYKGTANAVFQNIHYVDKYSPKYVIILSGDHVYKMNYSQMLDFHKENNADATISVINVPWEEASRYGIMNTYENGKIYEFEEKPQNPKSNLASMGVYIFNWEVLKEYLIRDDQNEESAHDFGKNIIPMMLKEGRSMWAYKFNGYWRDVGTIQAYWESNMDLISRVPEFNLFDPAWKIYTPNPVKPAHYIGPTGSVKKSIVAEGCMIYGSVRNSVLFPGVYVSEGAEIVDSIVMSDSVIGENTQIYKCIIGEEVKVGKNVRMGIGENIPNELKPHLYDSGITVVGEKAVVPDGCQIGKNVVIDPYITAEEFPSLNIESAKSVLKGGETE</sequence>
<dbReference type="EC" id="2.7.7.27" evidence="1"/>
<dbReference type="EMBL" id="CP000568">
    <property type="protein sequence ID" value="ABN54361.1"/>
    <property type="molecule type" value="Genomic_DNA"/>
</dbReference>
<dbReference type="RefSeq" id="WP_020458039.1">
    <property type="nucleotide sequence ID" value="NC_009012.1"/>
</dbReference>
<dbReference type="SMR" id="A3DK82"/>
<dbReference type="STRING" id="203119.Cthe_3166"/>
<dbReference type="GeneID" id="35803547"/>
<dbReference type="KEGG" id="cth:Cthe_3166"/>
<dbReference type="eggNOG" id="COG0448">
    <property type="taxonomic scope" value="Bacteria"/>
</dbReference>
<dbReference type="HOGENOM" id="CLU_029499_14_0_9"/>
<dbReference type="OrthoDB" id="9801810at2"/>
<dbReference type="UniPathway" id="UPA00164"/>
<dbReference type="Proteomes" id="UP000002145">
    <property type="component" value="Chromosome"/>
</dbReference>
<dbReference type="GO" id="GO:0005524">
    <property type="term" value="F:ATP binding"/>
    <property type="evidence" value="ECO:0007669"/>
    <property type="project" value="UniProtKB-KW"/>
</dbReference>
<dbReference type="GO" id="GO:0008878">
    <property type="term" value="F:glucose-1-phosphate adenylyltransferase activity"/>
    <property type="evidence" value="ECO:0007669"/>
    <property type="project" value="UniProtKB-UniRule"/>
</dbReference>
<dbReference type="GO" id="GO:0005978">
    <property type="term" value="P:glycogen biosynthetic process"/>
    <property type="evidence" value="ECO:0007669"/>
    <property type="project" value="UniProtKB-UniRule"/>
</dbReference>
<dbReference type="CDD" id="cd02508">
    <property type="entry name" value="ADP_Glucose_PP"/>
    <property type="match status" value="1"/>
</dbReference>
<dbReference type="CDD" id="cd04651">
    <property type="entry name" value="LbH_G1P_AT_C"/>
    <property type="match status" value="1"/>
</dbReference>
<dbReference type="Gene3D" id="2.160.10.10">
    <property type="entry name" value="Hexapeptide repeat proteins"/>
    <property type="match status" value="1"/>
</dbReference>
<dbReference type="Gene3D" id="3.90.550.10">
    <property type="entry name" value="Spore Coat Polysaccharide Biosynthesis Protein SpsA, Chain A"/>
    <property type="match status" value="1"/>
</dbReference>
<dbReference type="HAMAP" id="MF_00624">
    <property type="entry name" value="GlgC"/>
    <property type="match status" value="1"/>
</dbReference>
<dbReference type="InterPro" id="IPR011831">
    <property type="entry name" value="ADP-Glc_PPase"/>
</dbReference>
<dbReference type="InterPro" id="IPR005836">
    <property type="entry name" value="ADP_Glu_pyroP_CS"/>
</dbReference>
<dbReference type="InterPro" id="IPR023049">
    <property type="entry name" value="GlgC_bac"/>
</dbReference>
<dbReference type="InterPro" id="IPR056818">
    <property type="entry name" value="GlmU/GlgC-like_hexapep"/>
</dbReference>
<dbReference type="InterPro" id="IPR005835">
    <property type="entry name" value="NTP_transferase_dom"/>
</dbReference>
<dbReference type="InterPro" id="IPR029044">
    <property type="entry name" value="Nucleotide-diphossugar_trans"/>
</dbReference>
<dbReference type="InterPro" id="IPR011004">
    <property type="entry name" value="Trimer_LpxA-like_sf"/>
</dbReference>
<dbReference type="NCBIfam" id="TIGR02091">
    <property type="entry name" value="glgC"/>
    <property type="match status" value="1"/>
</dbReference>
<dbReference type="NCBIfam" id="NF003670">
    <property type="entry name" value="PRK05293.1"/>
    <property type="match status" value="1"/>
</dbReference>
<dbReference type="PANTHER" id="PTHR43523:SF2">
    <property type="entry name" value="GLUCOSE-1-PHOSPHATE ADENYLYLTRANSFERASE"/>
    <property type="match status" value="1"/>
</dbReference>
<dbReference type="PANTHER" id="PTHR43523">
    <property type="entry name" value="GLUCOSE-1-PHOSPHATE ADENYLYLTRANSFERASE-RELATED"/>
    <property type="match status" value="1"/>
</dbReference>
<dbReference type="Pfam" id="PF24894">
    <property type="entry name" value="Hexapep_GlmU"/>
    <property type="match status" value="1"/>
</dbReference>
<dbReference type="Pfam" id="PF00483">
    <property type="entry name" value="NTP_transferase"/>
    <property type="match status" value="1"/>
</dbReference>
<dbReference type="SUPFAM" id="SSF53448">
    <property type="entry name" value="Nucleotide-diphospho-sugar transferases"/>
    <property type="match status" value="1"/>
</dbReference>
<dbReference type="SUPFAM" id="SSF51161">
    <property type="entry name" value="Trimeric LpxA-like enzymes"/>
    <property type="match status" value="1"/>
</dbReference>
<dbReference type="PROSITE" id="PS00808">
    <property type="entry name" value="ADP_GLC_PYROPHOSPH_1"/>
    <property type="match status" value="1"/>
</dbReference>
<dbReference type="PROSITE" id="PS00809">
    <property type="entry name" value="ADP_GLC_PYROPHOSPH_2"/>
    <property type="match status" value="1"/>
</dbReference>
<dbReference type="PROSITE" id="PS00810">
    <property type="entry name" value="ADP_GLC_PYROPHOSPH_3"/>
    <property type="match status" value="1"/>
</dbReference>
<comment type="function">
    <text evidence="1">Involved in the biosynthesis of ADP-glucose, a building block required for the elongation reactions to produce glycogen. Catalyzes the reaction between ATP and alpha-D-glucose 1-phosphate (G1P) to produce pyrophosphate and ADP-Glc.</text>
</comment>
<comment type="catalytic activity">
    <reaction evidence="1">
        <text>alpha-D-glucose 1-phosphate + ATP + H(+) = ADP-alpha-D-glucose + diphosphate</text>
        <dbReference type="Rhea" id="RHEA:12120"/>
        <dbReference type="ChEBI" id="CHEBI:15378"/>
        <dbReference type="ChEBI" id="CHEBI:30616"/>
        <dbReference type="ChEBI" id="CHEBI:33019"/>
        <dbReference type="ChEBI" id="CHEBI:57498"/>
        <dbReference type="ChEBI" id="CHEBI:58601"/>
        <dbReference type="EC" id="2.7.7.27"/>
    </reaction>
</comment>
<comment type="pathway">
    <text evidence="1">Glycan biosynthesis; glycogen biosynthesis.</text>
</comment>
<comment type="subunit">
    <text evidence="1">Homotetramer.</text>
</comment>
<comment type="similarity">
    <text evidence="1">Belongs to the bacterial/plant glucose-1-phosphate adenylyltransferase family.</text>
</comment>
<reference key="1">
    <citation type="submission" date="2007-02" db="EMBL/GenBank/DDBJ databases">
        <title>Complete sequence of Clostridium thermocellum ATCC 27405.</title>
        <authorList>
            <consortium name="US DOE Joint Genome Institute"/>
            <person name="Copeland A."/>
            <person name="Lucas S."/>
            <person name="Lapidus A."/>
            <person name="Barry K."/>
            <person name="Detter J.C."/>
            <person name="Glavina del Rio T."/>
            <person name="Hammon N."/>
            <person name="Israni S."/>
            <person name="Dalin E."/>
            <person name="Tice H."/>
            <person name="Pitluck S."/>
            <person name="Chertkov O."/>
            <person name="Brettin T."/>
            <person name="Bruce D."/>
            <person name="Han C."/>
            <person name="Tapia R."/>
            <person name="Gilna P."/>
            <person name="Schmutz J."/>
            <person name="Larimer F."/>
            <person name="Land M."/>
            <person name="Hauser L."/>
            <person name="Kyrpides N."/>
            <person name="Mikhailova N."/>
            <person name="Wu J.H.D."/>
            <person name="Newcomb M."/>
            <person name="Richardson P."/>
        </authorList>
    </citation>
    <scope>NUCLEOTIDE SEQUENCE [LARGE SCALE GENOMIC DNA]</scope>
    <source>
        <strain>ATCC 27405 / DSM 1237 / JCM 9322 / NBRC 103400 / NCIMB 10682 / NRRL B-4536 / VPI 7372</strain>
    </source>
</reference>
<feature type="chain" id="PRO_1000051562" description="Glucose-1-phosphate adenylyltransferase">
    <location>
        <begin position="1"/>
        <end position="426"/>
    </location>
</feature>
<feature type="binding site" evidence="1">
    <location>
        <position position="100"/>
    </location>
    <ligand>
        <name>alpha-D-glucose 1-phosphate</name>
        <dbReference type="ChEBI" id="CHEBI:58601"/>
    </ligand>
</feature>
<feature type="binding site" evidence="1">
    <location>
        <position position="165"/>
    </location>
    <ligand>
        <name>alpha-D-glucose 1-phosphate</name>
        <dbReference type="ChEBI" id="CHEBI:58601"/>
    </ligand>
</feature>
<feature type="binding site" evidence="1">
    <location>
        <begin position="180"/>
        <end position="181"/>
    </location>
    <ligand>
        <name>alpha-D-glucose 1-phosphate</name>
        <dbReference type="ChEBI" id="CHEBI:58601"/>
    </ligand>
</feature>
<feature type="binding site" evidence="1">
    <location>
        <position position="191"/>
    </location>
    <ligand>
        <name>alpha-D-glucose 1-phosphate</name>
        <dbReference type="ChEBI" id="CHEBI:58601"/>
    </ligand>
</feature>